<name>ATS7_HUMAN</name>
<gene>
    <name type="primary">ADAMTS7</name>
</gene>
<keyword id="KW-0165">Cleavage on pair of basic residues</keyword>
<keyword id="KW-0903">Direct protein sequencing</keyword>
<keyword id="KW-1015">Disulfide bond</keyword>
<keyword id="KW-0272">Extracellular matrix</keyword>
<keyword id="KW-0325">Glycoprotein</keyword>
<keyword id="KW-0378">Hydrolase</keyword>
<keyword id="KW-0479">Metal-binding</keyword>
<keyword id="KW-0482">Metalloprotease</keyword>
<keyword id="KW-0645">Protease</keyword>
<keyword id="KW-0654">Proteoglycan</keyword>
<keyword id="KW-1267">Proteomics identification</keyword>
<keyword id="KW-1185">Reference proteome</keyword>
<keyword id="KW-0677">Repeat</keyword>
<keyword id="KW-0964">Secreted</keyword>
<keyword id="KW-0732">Signal</keyword>
<keyword id="KW-0862">Zinc</keyword>
<keyword id="KW-0865">Zymogen</keyword>
<proteinExistence type="evidence at protein level"/>
<evidence type="ECO:0000250" key="1"/>
<evidence type="ECO:0000250" key="2">
    <source>
        <dbReference type="UniProtKB" id="Q68SA9"/>
    </source>
</evidence>
<evidence type="ECO:0000250" key="3">
    <source>
        <dbReference type="UniProtKB" id="Q76LX8"/>
    </source>
</evidence>
<evidence type="ECO:0000255" key="4"/>
<evidence type="ECO:0000255" key="5">
    <source>
        <dbReference type="PROSITE-ProRule" id="PRU00210"/>
    </source>
</evidence>
<evidence type="ECO:0000255" key="6">
    <source>
        <dbReference type="PROSITE-ProRule" id="PRU00233"/>
    </source>
</evidence>
<evidence type="ECO:0000255" key="7">
    <source>
        <dbReference type="PROSITE-ProRule" id="PRU00276"/>
    </source>
</evidence>
<evidence type="ECO:0000255" key="8">
    <source>
        <dbReference type="PROSITE-ProRule" id="PRU10095"/>
    </source>
</evidence>
<evidence type="ECO:0000256" key="9">
    <source>
        <dbReference type="SAM" id="MobiDB-lite"/>
    </source>
</evidence>
<evidence type="ECO:0000269" key="10">
    <source>
    </source>
</evidence>
<evidence type="ECO:0000269" key="11">
    <source>
    </source>
</evidence>
<evidence type="ECO:0000269" key="12">
    <source>
    </source>
</evidence>
<evidence type="ECO:0000269" key="13">
    <source>
    </source>
</evidence>
<evidence type="ECO:0000305" key="14"/>
<protein>
    <recommendedName>
        <fullName>A disintegrin and metalloproteinase with thrombospondin motifs 7</fullName>
        <shortName>ADAM-TS 7</shortName>
        <shortName>ADAM-TS7</shortName>
        <shortName>ADAMTS-7</shortName>
        <ecNumber>3.4.24.-</ecNumber>
    </recommendedName>
</protein>
<sequence length="1686" mass="184095">MPGGPSPRSPAPLLRPLLLLLCALAPGAPGPAPGRATEGRAALDIVHPVRVDAGGSFLSYELWPRALRKRDVSVRRDAPAFYELQYRGRELRFNLTANQHLLAPGFVSETRRRGGLGRAHIRAHTPACHLLGEVQDPELEGGLAAISACDGLKGVFQLSNEDYFIEPLDSAPARPGHAQPHVVYKRQAPERLAQRGDSSAPSTCGVQVYPELESRRERWEQRQQWRRPRLRRLHQRSVSKEKWVETLVVADAKMVEYHGQPQVESYVLTIMNMVAGLFHDPSIGNPIHITIVRLVLLEDEEEDLKITHHADNTLKSFCKWQKSINMKGDAHPLHHDTAILLTRKDLCAAMNRPCETLGLSHVAGMCQPHRSCSINEDTGLPLAFTVAHELGHSFGIQHDGSGNDCEPVGKRPFIMSPQLLYDAAPLTWSRCSRQYITRFLDRGWGLCLDDPPAKDIIDFPSVPPGVLYDVSHQCRLQYGAYSAFCEDMDNVCHTLWCSVGTTCHSKLDAAVDGTRCGENKWCLSGECVPVGFRPEAVDGGWSGWSAWSICSRSCGMGVQSAERQCTQPTPKYKGRYCVGERKRFRLCNLQACPAGRPSFRHVQCSHFDAMLYKGQLHTWVPVVNDVNPCELHCRPANEYFAEKLRDAVVDGTPCYQVRASRDLCINGICKNVGCDFEIDSGAMEDRCGVCHGNGSTCHTVSGTFEEAEGLGYVDVGLIPAGAREIRIQEVAEAANFLALRSEDPEKYFLNGGWTIQWNGDYQVAGTTFTYARRGNWENLTSPGPTKEPVWIQLLFQESNPGVHYEYTIHREAGGHDEVPPPVFSWHYGPWTKCTVTCGRGVQRQNVYCLERQAGPVDEEHCDPLGRPDDQQRKCSEQPCPARWWAGEWQLCSSSCGPGGLSRRAVLCIRSVGLDEQSALEPPACEHLPRPPTETPCNRHVPCPATWAVGNWSQCSVTCGEGTQRRNVLCTNDTGVPCDEAQQPASEVTCSLPLCRWPLGTLGPEGSGSGSSSHELFNEADFIPHHLAPRPSPASSPKPGTMGNAIEEEAPELDLPGPVFVDDFYYDYNFINFHEDLSYGPSEEPDLDLAGTGDRTPPPHSHPAAPSTGSPVPATEPPAAKEEGVLGPWSPSPWPSQAGRSPPPPSEQTPGNPLINFLPEEDTPIGAPDLGLPSLSWPRVSTDGLQTPATPESQNDFPVGKDSQSQLPPPWRDRTNEVFKDDEEPKGRGAPHLPPRPSSTLPPLSPVGSTHSSPSPDVAELWTGGTVAWEPALEGGLGPVDSELWPTVGVASLLPPPIAPLPEMKVRDSSLEPGTPSFPTPGPGSWDLQTVAVWGTFLPTTLTGLGHMPEPALNPGPKGQPESLSPEVPLSSRLLSTPAWDSPANSHRVPETQPLAPSLAEAGPPADPLVVRNAGWQAGNWSECSTTCGLGAVWRPVRCSSGRDEDCAPAGRPQPARRCHLRPCATWHSGNWSKCSRSCGGGSSVRDVQCVDTRDLRPLRPFHCQPGPAKPPAHRPCGAQPCLSWYTSSWRECSEACGGGEQQRLVTCPEPGLCEEALRPNTTRPCNTHPCTQWVVGPWGQCSGPCGGGVQRRLVKCVNTQTGLPEEDSDQCGHEAWPESSRPCGTEDCEPVEPPRCERDRLSFGFCETLRLLGRCQLPTIRTQCCRSCSPPSHGAPSRGHQRVARR</sequence>
<comment type="function">
    <text evidence="12 13">Metalloprotease (PubMed:16585064, PubMed:39672391). Was previously shown to degrade COMP (PubMed:16585064). However, a later study found no activity against COMP (PubMed:39672391).</text>
</comment>
<comment type="cofactor">
    <cofactor evidence="1">
        <name>Zn(2+)</name>
        <dbReference type="ChEBI" id="CHEBI:29105"/>
    </cofactor>
    <text evidence="1">Binds 1 zinc ion per subunit.</text>
</comment>
<comment type="biophysicochemical properties">
    <phDependence>
        <text evidence="12">Optimum pH is between 7.5 and 9.5.</text>
    </phDependence>
</comment>
<comment type="subunit">
    <text evidence="12">Interacts with COMP.</text>
</comment>
<comment type="subcellular location">
    <subcellularLocation>
        <location evidence="2">Secreted</location>
        <location evidence="2">Extracellular space</location>
        <location evidence="2">Extracellular matrix</location>
    </subcellularLocation>
    <text evidence="2">Also found associated with the external cell surface.</text>
</comment>
<comment type="tissue specificity">
    <text evidence="10 12">Expressed in heart, brain, placenta, lung, liver, skeletal muscle, kidney and pancreas. Detected in meniscus, bone, tendon, cartilage, synovium, fat and ligaments.</text>
</comment>
<comment type="induction">
    <text evidence="12">Up-regulated in articular cartilage and synovium from arthritis patients.</text>
</comment>
<comment type="domain">
    <text>The spacer domain and the TSP type-1 domains are important for a tight interaction with the extracellular matrix.</text>
</comment>
<comment type="domain">
    <text>The conserved cysteine present in the cysteine-switch motif binds the catalytic zinc ion, thus inhibiting the enzyme. The dissociation of the cysteine from the zinc ion upon the activation-peptide release activates the enzyme.</text>
</comment>
<comment type="PTM">
    <text evidence="3">N-glycosylated. Can be O-fucosylated by POFUT2 on a serine or a threonine residue found within the consensus sequence C1-X(2)-(S/T)-C2-G of the TSP type-1 repeat domains where C1 and C2 are the first and second cysteine residue of the repeat, respectively. Fucosylated repeats can then be further glycosylated by the addition of a beta-1,3-glucose residue by the glucosyltransferase, B3GALTL. Fucosylation mediates the efficient secretion of ADAMTS family members. Can also be C-glycosylated with one or two mannose molecules on tryptophan residues within the consensus sequence W-X-X-W of the TPRs. N- and C-glycosylations can also facilitate secretion.</text>
</comment>
<comment type="PTM">
    <text evidence="10">O-glycosylated proteoglycan; contains chondroitin sulfate.</text>
</comment>
<comment type="PTM">
    <text evidence="2 10">May be cleaved by a furin endopeptidase (By similarity). The precursor is sequentially processed (PubMed:15192113).</text>
</comment>
<comment type="sequence caution" evidence="14">
    <conflict type="miscellaneous discrepancy">
        <sequence resource="EMBL-CDS" id="AAD56358"/>
    </conflict>
    <text>Probable cloning artifact.</text>
</comment>
<reference key="1">
    <citation type="journal article" date="2006" name="FASEB J.">
        <title>ADAMTS-7: a metalloproteinase that directly binds to and degrades cartilage oligomeric matrix protein.</title>
        <authorList>
            <person name="Liu C.-J."/>
            <person name="Kong W."/>
            <person name="Ilalov K."/>
            <person name="Yu S."/>
            <person name="Xu K."/>
            <person name="Prazak L."/>
            <person name="Fajardo M."/>
            <person name="Sehgal B."/>
            <person name="Di Cesare P.E."/>
        </authorList>
    </citation>
    <scope>NUCLEOTIDE SEQUENCE [MRNA]</scope>
    <scope>FUNCTION</scope>
    <scope>COFACTOR</scope>
    <scope>PH DEPENDENCE</scope>
    <scope>INTERACTION WITH COMP</scope>
    <scope>INDUCTION</scope>
    <scope>TISSUE SPECIFICITY</scope>
    <scope>VARIANTS ALA-1319; SER-1414 AND ALA-1583</scope>
</reference>
<reference key="2">
    <citation type="journal article" date="2004" name="Genome Res.">
        <title>The status, quality, and expansion of the NIH full-length cDNA project: the Mammalian Gene Collection (MGC).</title>
        <authorList>
            <consortium name="The MGC Project Team"/>
        </authorList>
    </citation>
    <scope>NUCLEOTIDE SEQUENCE [LARGE SCALE MRNA]</scope>
    <scope>VARIANT MET-307</scope>
    <source>
        <tissue>Ovary</tissue>
    </source>
</reference>
<reference key="3">
    <citation type="journal article" date="1999" name="J. Biol. Chem.">
        <title>ADAM-TS5, ADAM-TS6, and ADAM-TS7, novel members of a new family of zinc metalloproteases.</title>
        <authorList>
            <person name="Hurskainen T.L."/>
            <person name="Hirohata S."/>
            <person name="Seldin M.F."/>
            <person name="Apte S.S."/>
        </authorList>
    </citation>
    <scope>PARTIAL NUCLEOTIDE SEQUENCE [MRNA]</scope>
</reference>
<reference key="4">
    <citation type="journal article" date="2004" name="J. Biol. Chem.">
        <title>ADAMTS7B, the full-length product of the ADAMTS7 gene, is a chondroitin sulfate proteoglycan containing a mucin domain.</title>
        <authorList>
            <person name="Somerville R.P.T."/>
            <person name="Longpre J.-M."/>
            <person name="Apel E.D."/>
            <person name="Lewis R.M."/>
            <person name="Wang L.W."/>
            <person name="Sanes J.R."/>
            <person name="Leduc R."/>
            <person name="Apte S.S."/>
        </authorList>
    </citation>
    <scope>PROTEIN SEQUENCE OF 237-243</scope>
    <scope>IDENTIFICATION</scope>
    <scope>GLYCOSYLATION</scope>
    <scope>PROTEOLYTIC PROCESSING</scope>
    <scope>TISSUE SPECIFICITY</scope>
</reference>
<reference key="5">
    <citation type="journal article" date="2025" name="Matrix Biol.">
        <title>Cleavage of Cartilage Oligomeric Matrix Protein (COMP) by ADAMTS4 generates a neoepitope associated with osteoarthritis and other forms of degenerative joint disease.</title>
        <authorList>
            <person name="de Groot R."/>
            <person name="Folgado P.B."/>
            <person name="Yamamoto K."/>
            <person name="Martin D.R."/>
            <person name="Koch C.D."/>
            <person name="Debruin D."/>
            <person name="Blagg S."/>
            <person name="Minns A.F."/>
            <person name="Bhutada S."/>
            <person name="Ahnstroem J."/>
            <person name="Larkin J."/>
            <person name="Aspberg A."/>
            <person name="Oennerfjord P."/>
            <person name="Apte S.S."/>
            <person name="Santamaria S."/>
        </authorList>
    </citation>
    <scope>FUNCTION</scope>
</reference>
<feature type="signal peptide" evidence="4">
    <location>
        <begin position="1"/>
        <end position="27"/>
    </location>
</feature>
<feature type="propeptide" id="PRO_0000029176" evidence="10">
    <location>
        <begin position="28"/>
        <end position="236"/>
    </location>
</feature>
<feature type="chain" id="PRO_0000029177" description="A disintegrin and metalloproteinase with thrombospondin motifs 7">
    <location>
        <begin position="237"/>
        <end position="1686"/>
    </location>
</feature>
<feature type="domain" description="Peptidase M12B" evidence="7">
    <location>
        <begin position="242"/>
        <end position="452"/>
    </location>
</feature>
<feature type="domain" description="Disintegrin">
    <location>
        <begin position="462"/>
        <end position="537"/>
    </location>
</feature>
<feature type="domain" description="TSP type-1 1" evidence="5">
    <location>
        <begin position="538"/>
        <end position="593"/>
    </location>
</feature>
<feature type="domain" description="TSP type-1 2" evidence="5">
    <location>
        <begin position="821"/>
        <end position="880"/>
    </location>
</feature>
<feature type="domain" description="TSP type-1 3" evidence="5">
    <location>
        <begin position="881"/>
        <end position="940"/>
    </location>
</feature>
<feature type="domain" description="TSP type-1 4" evidence="5">
    <location>
        <begin position="942"/>
        <end position="995"/>
    </location>
</feature>
<feature type="domain" description="TSP type-1 5" evidence="5">
    <location>
        <begin position="1411"/>
        <end position="1459"/>
    </location>
</feature>
<feature type="domain" description="TSP type-1 6" evidence="5">
    <location>
        <begin position="1462"/>
        <end position="1522"/>
    </location>
</feature>
<feature type="domain" description="TSP type-1 7" evidence="5">
    <location>
        <begin position="1523"/>
        <end position="1567"/>
    </location>
</feature>
<feature type="domain" description="TSP type-1 8" evidence="5">
    <location>
        <begin position="1569"/>
        <end position="1629"/>
    </location>
</feature>
<feature type="domain" description="PLAC" evidence="6">
    <location>
        <begin position="1632"/>
        <end position="1672"/>
    </location>
</feature>
<feature type="region of interest" description="Spacer">
    <location>
        <begin position="698"/>
        <end position="809"/>
    </location>
</feature>
<feature type="region of interest" description="Disordered" evidence="9">
    <location>
        <begin position="1024"/>
        <end position="1043"/>
    </location>
</feature>
<feature type="region of interest" description="Disordered" evidence="9">
    <location>
        <begin position="1080"/>
        <end position="1257"/>
    </location>
</feature>
<feature type="region of interest" description="Disordered" evidence="9">
    <location>
        <begin position="1344"/>
        <end position="1396"/>
    </location>
</feature>
<feature type="region of interest" description="Disordered" evidence="9">
    <location>
        <begin position="1666"/>
        <end position="1686"/>
    </location>
</feature>
<feature type="short sequence motif" description="Cysteine switch" evidence="1">
    <location>
        <begin position="202"/>
        <end position="209"/>
    </location>
</feature>
<feature type="compositionally biased region" description="Polar residues" evidence="9">
    <location>
        <begin position="1182"/>
        <end position="1205"/>
    </location>
</feature>
<feature type="compositionally biased region" description="Basic and acidic residues" evidence="9">
    <location>
        <begin position="1210"/>
        <end position="1226"/>
    </location>
</feature>
<feature type="compositionally biased region" description="Low complexity" evidence="9">
    <location>
        <begin position="1360"/>
        <end position="1375"/>
    </location>
</feature>
<feature type="active site" evidence="7 8">
    <location>
        <position position="389"/>
    </location>
</feature>
<feature type="binding site" description="in inhibited form" evidence="1">
    <location>
        <position position="204"/>
    </location>
    <ligand>
        <name>Zn(2+)</name>
        <dbReference type="ChEBI" id="CHEBI:29105"/>
        <note>catalytic</note>
    </ligand>
</feature>
<feature type="binding site" evidence="1">
    <location>
        <position position="388"/>
    </location>
    <ligand>
        <name>Zn(2+)</name>
        <dbReference type="ChEBI" id="CHEBI:29105"/>
        <note>catalytic</note>
    </ligand>
</feature>
<feature type="binding site" evidence="1">
    <location>
        <position position="392"/>
    </location>
    <ligand>
        <name>Zn(2+)</name>
        <dbReference type="ChEBI" id="CHEBI:29105"/>
        <note>catalytic</note>
    </ligand>
</feature>
<feature type="binding site" evidence="1">
    <location>
        <position position="398"/>
    </location>
    <ligand>
        <name>Zn(2+)</name>
        <dbReference type="ChEBI" id="CHEBI:29105"/>
        <note>catalytic</note>
    </ligand>
</feature>
<feature type="glycosylation site" description="N-linked (GlcNAc...) asparagine" evidence="4">
    <location>
        <position position="94"/>
    </location>
</feature>
<feature type="glycosylation site" description="N-linked (GlcNAc...) asparagine" evidence="4">
    <location>
        <position position="693"/>
    </location>
</feature>
<feature type="glycosylation site" description="N-linked (GlcNAc...) asparagine" evidence="4">
    <location>
        <position position="778"/>
    </location>
</feature>
<feature type="disulfide bond" evidence="1">
    <location>
        <begin position="318"/>
        <end position="372"/>
    </location>
</feature>
<feature type="disulfide bond" evidence="1">
    <location>
        <begin position="347"/>
        <end position="354"/>
    </location>
</feature>
<feature type="disulfide bond" evidence="1">
    <location>
        <begin position="366"/>
        <end position="447"/>
    </location>
</feature>
<feature type="disulfide bond" evidence="1">
    <location>
        <begin position="405"/>
        <end position="431"/>
    </location>
</feature>
<feature type="disulfide bond" evidence="1">
    <location>
        <begin position="474"/>
        <end position="497"/>
    </location>
</feature>
<feature type="disulfide bond" evidence="1">
    <location>
        <begin position="485"/>
        <end position="503"/>
    </location>
</feature>
<feature type="disulfide bond" evidence="1">
    <location>
        <begin position="492"/>
        <end position="522"/>
    </location>
</feature>
<feature type="disulfide bond" evidence="1">
    <location>
        <begin position="516"/>
        <end position="527"/>
    </location>
</feature>
<feature type="disulfide bond" evidence="1">
    <location>
        <begin position="550"/>
        <end position="587"/>
    </location>
</feature>
<feature type="disulfide bond" evidence="1">
    <location>
        <begin position="554"/>
        <end position="592"/>
    </location>
</feature>
<feature type="disulfide bond" evidence="1">
    <location>
        <begin position="565"/>
        <end position="577"/>
    </location>
</feature>
<feature type="sequence variant" id="VAR_046112" description="In dbSNP:rs3825807.">
    <original>S</original>
    <variation>P</variation>
    <location>
        <position position="214"/>
    </location>
</feature>
<feature type="sequence variant" id="VAR_046113" description="In dbSNP:rs2127898." evidence="11">
    <original>T</original>
    <variation>M</variation>
    <location>
        <position position="307"/>
    </location>
</feature>
<feature type="sequence variant" id="VAR_046114" description="In dbSNP:rs11630236." evidence="12">
    <original>T</original>
    <variation>A</variation>
    <location>
        <position position="1319"/>
    </location>
</feature>
<feature type="sequence variant" id="VAR_046115" description="In dbSNP:rs2929155." evidence="12">
    <original>G</original>
    <variation>S</variation>
    <location>
        <position position="1414"/>
    </location>
</feature>
<feature type="sequence variant" id="VAR_046116" description="In dbSNP:rs7495616." evidence="12">
    <original>G</original>
    <variation>A</variation>
    <location>
        <position position="1583"/>
    </location>
</feature>
<feature type="sequence conflict" description="In Ref. 1; AAD56358." evidence="14" ref="1">
    <original>E</original>
    <variation>K</variation>
    <location>
        <position position="642"/>
    </location>
</feature>
<feature type="sequence conflict" description="In Ref. 2; AAQ94616." evidence="14" ref="2">
    <original>H</original>
    <variation>R</variation>
    <location>
        <position position="1101"/>
    </location>
</feature>
<feature type="sequence conflict" description="In Ref. 2; AAQ94616." evidence="14" ref="2">
    <original>S</original>
    <variation>T</variation>
    <location>
        <position position="1364"/>
    </location>
</feature>
<feature type="sequence conflict" description="In Ref. 2; AAQ94616." evidence="14" ref="2">
    <original>G</original>
    <variation>D</variation>
    <location>
        <position position="1479"/>
    </location>
</feature>
<feature type="sequence conflict" description="In Ref. 2; AAQ94616." evidence="14" ref="2">
    <original>P</original>
    <variation>H</variation>
    <location>
        <position position="1511"/>
    </location>
</feature>
<dbReference type="EC" id="3.4.24.-"/>
<dbReference type="EMBL" id="AY327122">
    <property type="protein sequence ID" value="AAQ94616.1"/>
    <property type="molecule type" value="mRNA"/>
</dbReference>
<dbReference type="EMBL" id="BC061631">
    <property type="protein sequence ID" value="AAH61631.1"/>
    <property type="molecule type" value="mRNA"/>
</dbReference>
<dbReference type="EMBL" id="AF140675">
    <property type="protein sequence ID" value="AAD56358.1"/>
    <property type="status" value="ALT_SEQ"/>
    <property type="molecule type" value="mRNA"/>
</dbReference>
<dbReference type="CCDS" id="CCDS32303.1"/>
<dbReference type="RefSeq" id="NP_055087.2">
    <property type="nucleotide sequence ID" value="NM_014272.4"/>
</dbReference>
<dbReference type="SMR" id="Q9UKP4"/>
<dbReference type="BioGRID" id="116344">
    <property type="interactions" value="102"/>
</dbReference>
<dbReference type="FunCoup" id="Q9UKP4">
    <property type="interactions" value="77"/>
</dbReference>
<dbReference type="IntAct" id="Q9UKP4">
    <property type="interactions" value="57"/>
</dbReference>
<dbReference type="STRING" id="9606.ENSP00000373472"/>
<dbReference type="GuidetoPHARMACOLOGY" id="1680"/>
<dbReference type="MEROPS" id="M12.231"/>
<dbReference type="GlyCosmos" id="Q9UKP4">
    <property type="glycosylation" value="17 sites, 2 glycans"/>
</dbReference>
<dbReference type="GlyGen" id="Q9UKP4">
    <property type="glycosylation" value="22 sites, 1 N-linked glycan (1 site), 3 O-linked glycans (18 sites)"/>
</dbReference>
<dbReference type="iPTMnet" id="Q9UKP4"/>
<dbReference type="PhosphoSitePlus" id="Q9UKP4"/>
<dbReference type="BioMuta" id="ADAMTS7"/>
<dbReference type="DMDM" id="205371741"/>
<dbReference type="MassIVE" id="Q9UKP4"/>
<dbReference type="PaxDb" id="9606-ENSP00000373472"/>
<dbReference type="PeptideAtlas" id="Q9UKP4"/>
<dbReference type="ProteomicsDB" id="84828"/>
<dbReference type="Antibodypedia" id="27710">
    <property type="antibodies" value="173 antibodies from 21 providers"/>
</dbReference>
<dbReference type="DNASU" id="11173"/>
<dbReference type="Ensembl" id="ENST00000388820.5">
    <property type="protein sequence ID" value="ENSP00000373472.4"/>
    <property type="gene ID" value="ENSG00000136378.15"/>
</dbReference>
<dbReference type="GeneID" id="11173"/>
<dbReference type="KEGG" id="hsa:11173"/>
<dbReference type="MANE-Select" id="ENST00000388820.5">
    <property type="protein sequence ID" value="ENSP00000373472.4"/>
    <property type="RefSeq nucleotide sequence ID" value="NM_014272.5"/>
    <property type="RefSeq protein sequence ID" value="NP_055087.2"/>
</dbReference>
<dbReference type="UCSC" id="uc002bej.4">
    <property type="organism name" value="human"/>
</dbReference>
<dbReference type="AGR" id="HGNC:223"/>
<dbReference type="CTD" id="11173"/>
<dbReference type="DisGeNET" id="11173"/>
<dbReference type="GeneCards" id="ADAMTS7"/>
<dbReference type="HGNC" id="HGNC:223">
    <property type="gene designation" value="ADAMTS7"/>
</dbReference>
<dbReference type="HPA" id="ENSG00000136378">
    <property type="expression patterns" value="Tissue enriched (heart)"/>
</dbReference>
<dbReference type="MIM" id="605009">
    <property type="type" value="gene"/>
</dbReference>
<dbReference type="neXtProt" id="NX_Q9UKP4"/>
<dbReference type="OpenTargets" id="ENSG00000136378"/>
<dbReference type="PharmGKB" id="PA24551"/>
<dbReference type="VEuPathDB" id="HostDB:ENSG00000136378"/>
<dbReference type="eggNOG" id="KOG3538">
    <property type="taxonomic scope" value="Eukaryota"/>
</dbReference>
<dbReference type="GeneTree" id="ENSGT00940000159819"/>
<dbReference type="HOGENOM" id="CLU_000660_2_1_1"/>
<dbReference type="InParanoid" id="Q9UKP4"/>
<dbReference type="OMA" id="YCSERQA"/>
<dbReference type="OrthoDB" id="412680at2759"/>
<dbReference type="PAN-GO" id="Q9UKP4">
    <property type="GO annotations" value="3 GO annotations based on evolutionary models"/>
</dbReference>
<dbReference type="PhylomeDB" id="Q9UKP4"/>
<dbReference type="TreeFam" id="TF313537"/>
<dbReference type="PathwayCommons" id="Q9UKP4"/>
<dbReference type="Reactome" id="R-HSA-5083635">
    <property type="pathway name" value="Defective B3GALTL causes PpS"/>
</dbReference>
<dbReference type="Reactome" id="R-HSA-5173214">
    <property type="pathway name" value="O-glycosylation of TSR domain-containing proteins"/>
</dbReference>
<dbReference type="SignaLink" id="Q9UKP4"/>
<dbReference type="BioGRID-ORCS" id="11173">
    <property type="hits" value="14 hits in 1148 CRISPR screens"/>
</dbReference>
<dbReference type="ChiTaRS" id="ADAMTS7">
    <property type="organism name" value="human"/>
</dbReference>
<dbReference type="GenomeRNAi" id="11173"/>
<dbReference type="Pharos" id="Q9UKP4">
    <property type="development level" value="Tbio"/>
</dbReference>
<dbReference type="PRO" id="PR:Q9UKP4"/>
<dbReference type="Proteomes" id="UP000005640">
    <property type="component" value="Chromosome 15"/>
</dbReference>
<dbReference type="RNAct" id="Q9UKP4">
    <property type="molecule type" value="protein"/>
</dbReference>
<dbReference type="Bgee" id="ENSG00000136378">
    <property type="expression patterns" value="Expressed in right atrium auricular region and 87 other cell types or tissues"/>
</dbReference>
<dbReference type="GO" id="GO:0009986">
    <property type="term" value="C:cell surface"/>
    <property type="evidence" value="ECO:0007669"/>
    <property type="project" value="Ensembl"/>
</dbReference>
<dbReference type="GO" id="GO:0005788">
    <property type="term" value="C:endoplasmic reticulum lumen"/>
    <property type="evidence" value="ECO:0000304"/>
    <property type="project" value="Reactome"/>
</dbReference>
<dbReference type="GO" id="GO:0031012">
    <property type="term" value="C:extracellular matrix"/>
    <property type="evidence" value="ECO:0000318"/>
    <property type="project" value="GO_Central"/>
</dbReference>
<dbReference type="GO" id="GO:0005576">
    <property type="term" value="C:extracellular region"/>
    <property type="evidence" value="ECO:0007669"/>
    <property type="project" value="UniProtKB-KW"/>
</dbReference>
<dbReference type="GO" id="GO:0046872">
    <property type="term" value="F:metal ion binding"/>
    <property type="evidence" value="ECO:0007669"/>
    <property type="project" value="UniProtKB-KW"/>
</dbReference>
<dbReference type="GO" id="GO:0004222">
    <property type="term" value="F:metalloendopeptidase activity"/>
    <property type="evidence" value="ECO:0000314"/>
    <property type="project" value="BHF-UCL"/>
</dbReference>
<dbReference type="GO" id="GO:0008237">
    <property type="term" value="F:metallopeptidase activity"/>
    <property type="evidence" value="ECO:0000304"/>
    <property type="project" value="ProtInc"/>
</dbReference>
<dbReference type="GO" id="GO:0071773">
    <property type="term" value="P:cellular response to BMP stimulus"/>
    <property type="evidence" value="ECO:0000314"/>
    <property type="project" value="BHF-UCL"/>
</dbReference>
<dbReference type="GO" id="GO:0071347">
    <property type="term" value="P:cellular response to interleukin-1"/>
    <property type="evidence" value="ECO:0000315"/>
    <property type="project" value="BHF-UCL"/>
</dbReference>
<dbReference type="GO" id="GO:0071356">
    <property type="term" value="P:cellular response to tumor necrosis factor"/>
    <property type="evidence" value="ECO:0000315"/>
    <property type="project" value="BHF-UCL"/>
</dbReference>
<dbReference type="GO" id="GO:0002062">
    <property type="term" value="P:chondrocyte differentiation"/>
    <property type="evidence" value="ECO:0007669"/>
    <property type="project" value="Ensembl"/>
</dbReference>
<dbReference type="GO" id="GO:0030199">
    <property type="term" value="P:collagen fibril organization"/>
    <property type="evidence" value="ECO:0007669"/>
    <property type="project" value="Ensembl"/>
</dbReference>
<dbReference type="GO" id="GO:0030198">
    <property type="term" value="P:extracellular matrix organization"/>
    <property type="evidence" value="ECO:0000318"/>
    <property type="project" value="GO_Central"/>
</dbReference>
<dbReference type="GO" id="GO:0032331">
    <property type="term" value="P:negative regulation of chondrocyte differentiation"/>
    <property type="evidence" value="ECO:0000314"/>
    <property type="project" value="BHF-UCL"/>
</dbReference>
<dbReference type="GO" id="GO:0043931">
    <property type="term" value="P:ossification involved in bone maturation"/>
    <property type="evidence" value="ECO:0007669"/>
    <property type="project" value="Ensembl"/>
</dbReference>
<dbReference type="GO" id="GO:0006029">
    <property type="term" value="P:proteoglycan metabolic process"/>
    <property type="evidence" value="ECO:0007669"/>
    <property type="project" value="Ensembl"/>
</dbReference>
<dbReference type="GO" id="GO:0006508">
    <property type="term" value="P:proteolysis"/>
    <property type="evidence" value="ECO:0000318"/>
    <property type="project" value="GO_Central"/>
</dbReference>
<dbReference type="GO" id="GO:0051603">
    <property type="term" value="P:proteolysis involved in protein catabolic process"/>
    <property type="evidence" value="ECO:0000315"/>
    <property type="project" value="BHF-UCL"/>
</dbReference>
<dbReference type="CDD" id="cd04273">
    <property type="entry name" value="ZnMc_ADAMTS_like"/>
    <property type="match status" value="1"/>
</dbReference>
<dbReference type="FunFam" id="2.60.120.830:FF:000001">
    <property type="entry name" value="A disintegrin and metalloproteinase with thrombospondin motifs 1"/>
    <property type="match status" value="1"/>
</dbReference>
<dbReference type="FunFam" id="3.40.390.10:FF:000001">
    <property type="entry name" value="A disintegrin and metalloproteinase with thrombospondin motifs 1"/>
    <property type="match status" value="1"/>
</dbReference>
<dbReference type="FunFam" id="2.20.100.10:FF:000035">
    <property type="entry name" value="A disintegrin and metalloproteinase with thrombospondin motifs 12"/>
    <property type="match status" value="1"/>
</dbReference>
<dbReference type="FunFam" id="3.40.1620.60:FF:000004">
    <property type="entry name" value="A disintegrin and metalloproteinase with thrombospondin motifs 12"/>
    <property type="match status" value="1"/>
</dbReference>
<dbReference type="FunFam" id="2.20.100.10:FF:000098">
    <property type="entry name" value="A disintegrin and metalloproteinase with thrombospondin motifs 7"/>
    <property type="match status" value="1"/>
</dbReference>
<dbReference type="FunFam" id="2.20.100.10:FF:000005">
    <property type="entry name" value="ADAM metallopeptidase with thrombospondin type 1 motif 9"/>
    <property type="match status" value="3"/>
</dbReference>
<dbReference type="Gene3D" id="2.60.120.830">
    <property type="match status" value="1"/>
</dbReference>
<dbReference type="Gene3D" id="3.40.1620.60">
    <property type="match status" value="1"/>
</dbReference>
<dbReference type="Gene3D" id="3.40.390.10">
    <property type="entry name" value="Collagenase (Catalytic Domain)"/>
    <property type="match status" value="1"/>
</dbReference>
<dbReference type="Gene3D" id="2.20.100.10">
    <property type="entry name" value="Thrombospondin type-1 (TSP1) repeat"/>
    <property type="match status" value="8"/>
</dbReference>
<dbReference type="InterPro" id="IPR013273">
    <property type="entry name" value="ADAMTS/ADAMTS-like"/>
</dbReference>
<dbReference type="InterPro" id="IPR050439">
    <property type="entry name" value="ADAMTS_ADAMTS-like"/>
</dbReference>
<dbReference type="InterPro" id="IPR041645">
    <property type="entry name" value="ADAMTS_CR_2"/>
</dbReference>
<dbReference type="InterPro" id="IPR045371">
    <property type="entry name" value="ADAMTS_CR_3"/>
</dbReference>
<dbReference type="InterPro" id="IPR010294">
    <property type="entry name" value="ADAMTS_spacer1"/>
</dbReference>
<dbReference type="InterPro" id="IPR024079">
    <property type="entry name" value="MetalloPept_cat_dom_sf"/>
</dbReference>
<dbReference type="InterPro" id="IPR001590">
    <property type="entry name" value="Peptidase_M12B"/>
</dbReference>
<dbReference type="InterPro" id="IPR002870">
    <property type="entry name" value="Peptidase_M12B_N"/>
</dbReference>
<dbReference type="InterPro" id="IPR010909">
    <property type="entry name" value="PLAC"/>
</dbReference>
<dbReference type="InterPro" id="IPR000884">
    <property type="entry name" value="TSP1_rpt"/>
</dbReference>
<dbReference type="InterPro" id="IPR036383">
    <property type="entry name" value="TSP1_rpt_sf"/>
</dbReference>
<dbReference type="PANTHER" id="PTHR13723:SF142">
    <property type="entry name" value="A DISINTEGRIN AND METALLOPROTEINASE WITH THROMBOSPONDIN MOTIFS 7"/>
    <property type="match status" value="1"/>
</dbReference>
<dbReference type="PANTHER" id="PTHR13723">
    <property type="entry name" value="ADAMTS A DISINTEGRIN AND METALLOPROTEASE WITH THROMBOSPONDIN MOTIFS PROTEASE"/>
    <property type="match status" value="1"/>
</dbReference>
<dbReference type="Pfam" id="PF17771">
    <property type="entry name" value="ADAMTS_CR_2"/>
    <property type="match status" value="1"/>
</dbReference>
<dbReference type="Pfam" id="PF19236">
    <property type="entry name" value="ADAMTS_CR_3"/>
    <property type="match status" value="1"/>
</dbReference>
<dbReference type="Pfam" id="PF05986">
    <property type="entry name" value="ADAMTS_spacer1"/>
    <property type="match status" value="1"/>
</dbReference>
<dbReference type="Pfam" id="PF01562">
    <property type="entry name" value="Pep_M12B_propep"/>
    <property type="match status" value="1"/>
</dbReference>
<dbReference type="Pfam" id="PF01421">
    <property type="entry name" value="Reprolysin"/>
    <property type="match status" value="1"/>
</dbReference>
<dbReference type="Pfam" id="PF19030">
    <property type="entry name" value="TSP1_ADAMTS"/>
    <property type="match status" value="7"/>
</dbReference>
<dbReference type="Pfam" id="PF00090">
    <property type="entry name" value="TSP_1"/>
    <property type="match status" value="1"/>
</dbReference>
<dbReference type="PRINTS" id="PR01857">
    <property type="entry name" value="ADAMTSFAMILY"/>
</dbReference>
<dbReference type="SMART" id="SM00209">
    <property type="entry name" value="TSP1"/>
    <property type="match status" value="8"/>
</dbReference>
<dbReference type="SUPFAM" id="SSF55486">
    <property type="entry name" value="Metalloproteases ('zincins'), catalytic domain"/>
    <property type="match status" value="1"/>
</dbReference>
<dbReference type="SUPFAM" id="SSF82895">
    <property type="entry name" value="TSP-1 type 1 repeat"/>
    <property type="match status" value="8"/>
</dbReference>
<dbReference type="PROSITE" id="PS50215">
    <property type="entry name" value="ADAM_MEPRO"/>
    <property type="match status" value="1"/>
</dbReference>
<dbReference type="PROSITE" id="PS50900">
    <property type="entry name" value="PLAC"/>
    <property type="match status" value="1"/>
</dbReference>
<dbReference type="PROSITE" id="PS50092">
    <property type="entry name" value="TSP1"/>
    <property type="match status" value="7"/>
</dbReference>
<dbReference type="PROSITE" id="PS00142">
    <property type="entry name" value="ZINC_PROTEASE"/>
    <property type="match status" value="1"/>
</dbReference>
<accession>Q9UKP4</accession>
<accession>Q14F51</accession>
<accession>Q6P7J9</accession>
<organism>
    <name type="scientific">Homo sapiens</name>
    <name type="common">Human</name>
    <dbReference type="NCBI Taxonomy" id="9606"/>
    <lineage>
        <taxon>Eukaryota</taxon>
        <taxon>Metazoa</taxon>
        <taxon>Chordata</taxon>
        <taxon>Craniata</taxon>
        <taxon>Vertebrata</taxon>
        <taxon>Euteleostomi</taxon>
        <taxon>Mammalia</taxon>
        <taxon>Eutheria</taxon>
        <taxon>Euarchontoglires</taxon>
        <taxon>Primates</taxon>
        <taxon>Haplorrhini</taxon>
        <taxon>Catarrhini</taxon>
        <taxon>Hominidae</taxon>
        <taxon>Homo</taxon>
    </lineage>
</organism>